<protein>
    <recommendedName>
        <fullName evidence="1">Cytidine deaminase</fullName>
        <ecNumber evidence="1">3.5.4.5</ecNumber>
    </recommendedName>
    <alternativeName>
        <fullName evidence="1">Cytidine aminohydrolase</fullName>
        <shortName evidence="1">CDA</shortName>
    </alternativeName>
</protein>
<feature type="chain" id="PRO_1000068963" description="Cytidine deaminase">
    <location>
        <begin position="1"/>
        <end position="296"/>
    </location>
</feature>
<feature type="domain" description="CMP/dCMP-type deaminase 1" evidence="2">
    <location>
        <begin position="47"/>
        <end position="167"/>
    </location>
</feature>
<feature type="domain" description="CMP/dCMP-type deaminase 2" evidence="2">
    <location>
        <begin position="186"/>
        <end position="296"/>
    </location>
</feature>
<feature type="active site" description="Proton donor" evidence="1">
    <location>
        <position position="103"/>
    </location>
</feature>
<feature type="binding site" evidence="1">
    <location>
        <begin position="88"/>
        <end position="90"/>
    </location>
    <ligand>
        <name>substrate</name>
    </ligand>
</feature>
<feature type="binding site" evidence="1">
    <location>
        <position position="101"/>
    </location>
    <ligand>
        <name>Zn(2+)</name>
        <dbReference type="ChEBI" id="CHEBI:29105"/>
        <note>catalytic</note>
    </ligand>
</feature>
<feature type="binding site" evidence="1">
    <location>
        <position position="128"/>
    </location>
    <ligand>
        <name>Zn(2+)</name>
        <dbReference type="ChEBI" id="CHEBI:29105"/>
        <note>catalytic</note>
    </ligand>
</feature>
<feature type="binding site" evidence="1">
    <location>
        <position position="131"/>
    </location>
    <ligand>
        <name>Zn(2+)</name>
        <dbReference type="ChEBI" id="CHEBI:29105"/>
        <note>catalytic</note>
    </ligand>
</feature>
<proteinExistence type="inferred from homology"/>
<evidence type="ECO:0000255" key="1">
    <source>
        <dbReference type="HAMAP-Rule" id="MF_01558"/>
    </source>
</evidence>
<evidence type="ECO:0000255" key="2">
    <source>
        <dbReference type="PROSITE-ProRule" id="PRU01083"/>
    </source>
</evidence>
<gene>
    <name evidence="1" type="primary">cdd</name>
    <name type="ordered locus">Shew_1610</name>
</gene>
<accession>A3QDC9</accession>
<keyword id="KW-0378">Hydrolase</keyword>
<keyword id="KW-0479">Metal-binding</keyword>
<keyword id="KW-1185">Reference proteome</keyword>
<keyword id="KW-0862">Zinc</keyword>
<organism>
    <name type="scientific">Shewanella loihica (strain ATCC BAA-1088 / PV-4)</name>
    <dbReference type="NCBI Taxonomy" id="323850"/>
    <lineage>
        <taxon>Bacteria</taxon>
        <taxon>Pseudomonadati</taxon>
        <taxon>Pseudomonadota</taxon>
        <taxon>Gammaproteobacteria</taxon>
        <taxon>Alteromonadales</taxon>
        <taxon>Shewanellaceae</taxon>
        <taxon>Shewanella</taxon>
    </lineage>
</organism>
<name>CDD_SHELP</name>
<dbReference type="EC" id="3.5.4.5" evidence="1"/>
<dbReference type="EMBL" id="CP000606">
    <property type="protein sequence ID" value="ABO23477.1"/>
    <property type="molecule type" value="Genomic_DNA"/>
</dbReference>
<dbReference type="RefSeq" id="WP_011865409.1">
    <property type="nucleotide sequence ID" value="NC_009092.1"/>
</dbReference>
<dbReference type="SMR" id="A3QDC9"/>
<dbReference type="STRING" id="323850.Shew_1610"/>
<dbReference type="KEGG" id="slo:Shew_1610"/>
<dbReference type="eggNOG" id="COG0295">
    <property type="taxonomic scope" value="Bacteria"/>
</dbReference>
<dbReference type="HOGENOM" id="CLU_052424_0_0_6"/>
<dbReference type="OrthoDB" id="9795347at2"/>
<dbReference type="Proteomes" id="UP000001558">
    <property type="component" value="Chromosome"/>
</dbReference>
<dbReference type="GO" id="GO:0005829">
    <property type="term" value="C:cytosol"/>
    <property type="evidence" value="ECO:0007669"/>
    <property type="project" value="TreeGrafter"/>
</dbReference>
<dbReference type="GO" id="GO:0004126">
    <property type="term" value="F:cytidine deaminase activity"/>
    <property type="evidence" value="ECO:0007669"/>
    <property type="project" value="UniProtKB-UniRule"/>
</dbReference>
<dbReference type="GO" id="GO:0042802">
    <property type="term" value="F:identical protein binding"/>
    <property type="evidence" value="ECO:0007669"/>
    <property type="project" value="UniProtKB-ARBA"/>
</dbReference>
<dbReference type="GO" id="GO:0008270">
    <property type="term" value="F:zinc ion binding"/>
    <property type="evidence" value="ECO:0007669"/>
    <property type="project" value="UniProtKB-UniRule"/>
</dbReference>
<dbReference type="GO" id="GO:0009972">
    <property type="term" value="P:cytidine deamination"/>
    <property type="evidence" value="ECO:0007669"/>
    <property type="project" value="InterPro"/>
</dbReference>
<dbReference type="CDD" id="cd01283">
    <property type="entry name" value="cytidine_deaminase"/>
    <property type="match status" value="1"/>
</dbReference>
<dbReference type="FunFam" id="3.40.140.10:FF:000007">
    <property type="entry name" value="Cytidine deaminase"/>
    <property type="match status" value="1"/>
</dbReference>
<dbReference type="Gene3D" id="3.40.140.10">
    <property type="entry name" value="Cytidine Deaminase, domain 2"/>
    <property type="match status" value="2"/>
</dbReference>
<dbReference type="HAMAP" id="MF_01558">
    <property type="entry name" value="Cyt_deam"/>
    <property type="match status" value="1"/>
</dbReference>
<dbReference type="InterPro" id="IPR016192">
    <property type="entry name" value="APOBEC/CMP_deaminase_Zn-bd"/>
</dbReference>
<dbReference type="InterPro" id="IPR002125">
    <property type="entry name" value="CMP_dCMP_dom"/>
</dbReference>
<dbReference type="InterPro" id="IPR013171">
    <property type="entry name" value="Cyd/dCyd_deaminase_Zn-bd"/>
</dbReference>
<dbReference type="InterPro" id="IPR050202">
    <property type="entry name" value="Cyt/Deoxycyt_deaminase"/>
</dbReference>
<dbReference type="InterPro" id="IPR016193">
    <property type="entry name" value="Cytidine_deaminase-like"/>
</dbReference>
<dbReference type="InterPro" id="IPR020797">
    <property type="entry name" value="Cytidine_deaminase_bacteria"/>
</dbReference>
<dbReference type="NCBIfam" id="NF006537">
    <property type="entry name" value="PRK09027.1"/>
    <property type="match status" value="1"/>
</dbReference>
<dbReference type="PANTHER" id="PTHR11644">
    <property type="entry name" value="CYTIDINE DEAMINASE"/>
    <property type="match status" value="1"/>
</dbReference>
<dbReference type="PANTHER" id="PTHR11644:SF2">
    <property type="entry name" value="CYTIDINE DEAMINASE"/>
    <property type="match status" value="1"/>
</dbReference>
<dbReference type="Pfam" id="PF00383">
    <property type="entry name" value="dCMP_cyt_deam_1"/>
    <property type="match status" value="1"/>
</dbReference>
<dbReference type="Pfam" id="PF08211">
    <property type="entry name" value="dCMP_cyt_deam_2"/>
    <property type="match status" value="1"/>
</dbReference>
<dbReference type="PIRSF" id="PIRSF006334">
    <property type="entry name" value="Cdd_plus_pseudo"/>
    <property type="match status" value="1"/>
</dbReference>
<dbReference type="SUPFAM" id="SSF53927">
    <property type="entry name" value="Cytidine deaminase-like"/>
    <property type="match status" value="2"/>
</dbReference>
<dbReference type="PROSITE" id="PS00903">
    <property type="entry name" value="CYT_DCMP_DEAMINASES_1"/>
    <property type="match status" value="1"/>
</dbReference>
<dbReference type="PROSITE" id="PS51747">
    <property type="entry name" value="CYT_DCMP_DEAMINASES_2"/>
    <property type="match status" value="2"/>
</dbReference>
<sequence>MQDRFVHCIAQLPQPLADQLVPLLNQDFVGHMDAQQVADLAAATQMSQDELLLALLPIAAALAKPPISEFYVGAIAKGASGDIYMGANLELDGEALFHSVHAEQSAISHAWLSGETGIEDIIVNASPCGHCRQFMNELVEGQAIRIHLPEQATQPLSHYLPYAFGPADLNIKTPLLSKQQHEFTLESADPMIIEALDHLSLSYAPYSESYAAVVLETRDGATFCGRYAENAAFNPSMLPMQMALSAMARHNRDFSEINRAVLIESSQGKISLVGATMDALHAVAAVELEHIMVDPV</sequence>
<comment type="function">
    <text evidence="1">This enzyme scavenges exogenous and endogenous cytidine and 2'-deoxycytidine for UMP synthesis.</text>
</comment>
<comment type="catalytic activity">
    <reaction evidence="1">
        <text>cytidine + H2O + H(+) = uridine + NH4(+)</text>
        <dbReference type="Rhea" id="RHEA:16069"/>
        <dbReference type="ChEBI" id="CHEBI:15377"/>
        <dbReference type="ChEBI" id="CHEBI:15378"/>
        <dbReference type="ChEBI" id="CHEBI:16704"/>
        <dbReference type="ChEBI" id="CHEBI:17562"/>
        <dbReference type="ChEBI" id="CHEBI:28938"/>
        <dbReference type="EC" id="3.5.4.5"/>
    </reaction>
</comment>
<comment type="catalytic activity">
    <reaction evidence="1">
        <text>2'-deoxycytidine + H2O + H(+) = 2'-deoxyuridine + NH4(+)</text>
        <dbReference type="Rhea" id="RHEA:13433"/>
        <dbReference type="ChEBI" id="CHEBI:15377"/>
        <dbReference type="ChEBI" id="CHEBI:15378"/>
        <dbReference type="ChEBI" id="CHEBI:15698"/>
        <dbReference type="ChEBI" id="CHEBI:16450"/>
        <dbReference type="ChEBI" id="CHEBI:28938"/>
        <dbReference type="EC" id="3.5.4.5"/>
    </reaction>
</comment>
<comment type="cofactor">
    <cofactor evidence="1">
        <name>Zn(2+)</name>
        <dbReference type="ChEBI" id="CHEBI:29105"/>
    </cofactor>
    <text evidence="1">Binds 1 zinc ion.</text>
</comment>
<comment type="subunit">
    <text evidence="1">Homodimer.</text>
</comment>
<comment type="similarity">
    <text evidence="1">Belongs to the cytidine and deoxycytidylate deaminase family.</text>
</comment>
<reference key="1">
    <citation type="submission" date="2007-03" db="EMBL/GenBank/DDBJ databases">
        <title>Complete sequence of Shewanella loihica PV-4.</title>
        <authorList>
            <consortium name="US DOE Joint Genome Institute"/>
            <person name="Copeland A."/>
            <person name="Lucas S."/>
            <person name="Lapidus A."/>
            <person name="Barry K."/>
            <person name="Detter J.C."/>
            <person name="Glavina del Rio T."/>
            <person name="Hammon N."/>
            <person name="Israni S."/>
            <person name="Dalin E."/>
            <person name="Tice H."/>
            <person name="Pitluck S."/>
            <person name="Chain P."/>
            <person name="Malfatti S."/>
            <person name="Shin M."/>
            <person name="Vergez L."/>
            <person name="Schmutz J."/>
            <person name="Larimer F."/>
            <person name="Land M."/>
            <person name="Hauser L."/>
            <person name="Kyrpides N."/>
            <person name="Mikhailova N."/>
            <person name="Romine M.F."/>
            <person name="Serres G."/>
            <person name="Fredrickson J."/>
            <person name="Tiedje J."/>
            <person name="Richardson P."/>
        </authorList>
    </citation>
    <scope>NUCLEOTIDE SEQUENCE [LARGE SCALE GENOMIC DNA]</scope>
    <source>
        <strain>ATCC BAA-1088 / PV-4</strain>
    </source>
</reference>